<reference key="1">
    <citation type="journal article" date="2001" name="Proc. Natl. Acad. Sci. U.S.A.">
        <title>Complete genome sequence of Caulobacter crescentus.</title>
        <authorList>
            <person name="Nierman W.C."/>
            <person name="Feldblyum T.V."/>
            <person name="Laub M.T."/>
            <person name="Paulsen I.T."/>
            <person name="Nelson K.E."/>
            <person name="Eisen J.A."/>
            <person name="Heidelberg J.F."/>
            <person name="Alley M.R.K."/>
            <person name="Ohta N."/>
            <person name="Maddock J.R."/>
            <person name="Potocka I."/>
            <person name="Nelson W.C."/>
            <person name="Newton A."/>
            <person name="Stephens C."/>
            <person name="Phadke N.D."/>
            <person name="Ely B."/>
            <person name="DeBoy R.T."/>
            <person name="Dodson R.J."/>
            <person name="Durkin A.S."/>
            <person name="Gwinn M.L."/>
            <person name="Haft D.H."/>
            <person name="Kolonay J.F."/>
            <person name="Smit J."/>
            <person name="Craven M.B."/>
            <person name="Khouri H.M."/>
            <person name="Shetty J."/>
            <person name="Berry K.J."/>
            <person name="Utterback T.R."/>
            <person name="Tran K."/>
            <person name="Wolf A.M."/>
            <person name="Vamathevan J.J."/>
            <person name="Ermolaeva M.D."/>
            <person name="White O."/>
            <person name="Salzberg S.L."/>
            <person name="Venter J.C."/>
            <person name="Shapiro L."/>
            <person name="Fraser C.M."/>
        </authorList>
    </citation>
    <scope>NUCLEOTIDE SEQUENCE [LARGE SCALE GENOMIC DNA]</scope>
    <source>
        <strain>ATCC 19089 / CIP 103742 / CB 15</strain>
    </source>
</reference>
<sequence>MIQMQTNLEVADNSGARRVMCIKVLGGAGRRYASVGDVIVVSVKEAIPRGRVKKGDVLRAVVVRVNQNLKRKDGSVIRFDKNAAVIVNKQSEPVGTRIFGPVPRELRAKNHMKIISLAPEVL</sequence>
<comment type="function">
    <text evidence="1">Binds to 23S rRNA. Forms part of two intersubunit bridges in the 70S ribosome.</text>
</comment>
<comment type="subunit">
    <text evidence="1">Part of the 50S ribosomal subunit. Forms a cluster with proteins L3 and L19. In the 70S ribosome, L14 and L19 interact and together make contacts with the 16S rRNA in bridges B5 and B8.</text>
</comment>
<comment type="similarity">
    <text evidence="1">Belongs to the universal ribosomal protein uL14 family.</text>
</comment>
<proteinExistence type="inferred from homology"/>
<keyword id="KW-1185">Reference proteome</keyword>
<keyword id="KW-0687">Ribonucleoprotein</keyword>
<keyword id="KW-0689">Ribosomal protein</keyword>
<keyword id="KW-0694">RNA-binding</keyword>
<keyword id="KW-0699">rRNA-binding</keyword>
<protein>
    <recommendedName>
        <fullName evidence="1">Large ribosomal subunit protein uL14</fullName>
    </recommendedName>
    <alternativeName>
        <fullName evidence="2">50S ribosomal protein L14</fullName>
    </alternativeName>
</protein>
<name>RL14_CAUVC</name>
<gene>
    <name evidence="1" type="primary">rplN</name>
    <name type="ordered locus">CC_1258</name>
</gene>
<feature type="chain" id="PRO_1000055548" description="Large ribosomal subunit protein uL14">
    <location>
        <begin position="1"/>
        <end position="122"/>
    </location>
</feature>
<accession>Q9A8U3</accession>
<dbReference type="EMBL" id="AE005673">
    <property type="protein sequence ID" value="AAK23239.1"/>
    <property type="molecule type" value="Genomic_DNA"/>
</dbReference>
<dbReference type="PIR" id="C87405">
    <property type="entry name" value="C87405"/>
</dbReference>
<dbReference type="RefSeq" id="NP_420071.1">
    <property type="nucleotide sequence ID" value="NC_002696.2"/>
</dbReference>
<dbReference type="RefSeq" id="WP_010919137.1">
    <property type="nucleotide sequence ID" value="NC_002696.2"/>
</dbReference>
<dbReference type="SMR" id="Q9A8U3"/>
<dbReference type="STRING" id="190650.CC_1258"/>
<dbReference type="EnsemblBacteria" id="AAK23239">
    <property type="protein sequence ID" value="AAK23239"/>
    <property type="gene ID" value="CC_1258"/>
</dbReference>
<dbReference type="KEGG" id="ccr:CC_1258"/>
<dbReference type="PATRIC" id="fig|190650.5.peg.1283"/>
<dbReference type="eggNOG" id="COG0093">
    <property type="taxonomic scope" value="Bacteria"/>
</dbReference>
<dbReference type="HOGENOM" id="CLU_095071_2_1_5"/>
<dbReference type="BioCyc" id="CAULO:CC1258-MONOMER"/>
<dbReference type="Proteomes" id="UP000001816">
    <property type="component" value="Chromosome"/>
</dbReference>
<dbReference type="GO" id="GO:0022625">
    <property type="term" value="C:cytosolic large ribosomal subunit"/>
    <property type="evidence" value="ECO:0007669"/>
    <property type="project" value="TreeGrafter"/>
</dbReference>
<dbReference type="GO" id="GO:0070180">
    <property type="term" value="F:large ribosomal subunit rRNA binding"/>
    <property type="evidence" value="ECO:0007669"/>
    <property type="project" value="TreeGrafter"/>
</dbReference>
<dbReference type="GO" id="GO:0003735">
    <property type="term" value="F:structural constituent of ribosome"/>
    <property type="evidence" value="ECO:0007669"/>
    <property type="project" value="InterPro"/>
</dbReference>
<dbReference type="GO" id="GO:0006412">
    <property type="term" value="P:translation"/>
    <property type="evidence" value="ECO:0007669"/>
    <property type="project" value="UniProtKB-UniRule"/>
</dbReference>
<dbReference type="CDD" id="cd00337">
    <property type="entry name" value="Ribosomal_uL14"/>
    <property type="match status" value="1"/>
</dbReference>
<dbReference type="FunFam" id="2.40.150.20:FF:000001">
    <property type="entry name" value="50S ribosomal protein L14"/>
    <property type="match status" value="1"/>
</dbReference>
<dbReference type="Gene3D" id="2.40.150.20">
    <property type="entry name" value="Ribosomal protein L14"/>
    <property type="match status" value="1"/>
</dbReference>
<dbReference type="HAMAP" id="MF_01367">
    <property type="entry name" value="Ribosomal_uL14"/>
    <property type="match status" value="1"/>
</dbReference>
<dbReference type="InterPro" id="IPR000218">
    <property type="entry name" value="Ribosomal_uL14"/>
</dbReference>
<dbReference type="InterPro" id="IPR005745">
    <property type="entry name" value="Ribosomal_uL14_bac-type"/>
</dbReference>
<dbReference type="InterPro" id="IPR019972">
    <property type="entry name" value="Ribosomal_uL14_CS"/>
</dbReference>
<dbReference type="InterPro" id="IPR036853">
    <property type="entry name" value="Ribosomal_uL14_sf"/>
</dbReference>
<dbReference type="NCBIfam" id="TIGR01067">
    <property type="entry name" value="rplN_bact"/>
    <property type="match status" value="1"/>
</dbReference>
<dbReference type="PANTHER" id="PTHR11761">
    <property type="entry name" value="50S/60S RIBOSOMAL PROTEIN L14/L23"/>
    <property type="match status" value="1"/>
</dbReference>
<dbReference type="PANTHER" id="PTHR11761:SF3">
    <property type="entry name" value="LARGE RIBOSOMAL SUBUNIT PROTEIN UL14M"/>
    <property type="match status" value="1"/>
</dbReference>
<dbReference type="Pfam" id="PF00238">
    <property type="entry name" value="Ribosomal_L14"/>
    <property type="match status" value="1"/>
</dbReference>
<dbReference type="SMART" id="SM01374">
    <property type="entry name" value="Ribosomal_L14"/>
    <property type="match status" value="1"/>
</dbReference>
<dbReference type="SUPFAM" id="SSF50193">
    <property type="entry name" value="Ribosomal protein L14"/>
    <property type="match status" value="1"/>
</dbReference>
<dbReference type="PROSITE" id="PS00049">
    <property type="entry name" value="RIBOSOMAL_L14"/>
    <property type="match status" value="1"/>
</dbReference>
<organism>
    <name type="scientific">Caulobacter vibrioides (strain ATCC 19089 / CIP 103742 / CB 15)</name>
    <name type="common">Caulobacter crescentus</name>
    <dbReference type="NCBI Taxonomy" id="190650"/>
    <lineage>
        <taxon>Bacteria</taxon>
        <taxon>Pseudomonadati</taxon>
        <taxon>Pseudomonadota</taxon>
        <taxon>Alphaproteobacteria</taxon>
        <taxon>Caulobacterales</taxon>
        <taxon>Caulobacteraceae</taxon>
        <taxon>Caulobacter</taxon>
    </lineage>
</organism>
<evidence type="ECO:0000255" key="1">
    <source>
        <dbReference type="HAMAP-Rule" id="MF_01367"/>
    </source>
</evidence>
<evidence type="ECO:0000305" key="2"/>